<protein>
    <recommendedName>
        <fullName evidence="3">Eukaryotic translation initiation factor 3 subunit D-1</fullName>
        <shortName evidence="3">eIF3d-1</shortName>
    </recommendedName>
    <alternativeName>
        <fullName evidence="3">Eukaryotic translation initiation factor 3 subunit 7-1</fullName>
    </alternativeName>
    <alternativeName>
        <fullName>Eukaryotic translation initiation factor 3 subunit p66</fullName>
    </alternativeName>
</protein>
<accession>B3LY71</accession>
<reference key="1">
    <citation type="journal article" date="2007" name="Nature">
        <title>Evolution of genes and genomes on the Drosophila phylogeny.</title>
        <authorList>
            <consortium name="Drosophila 12 genomes consortium"/>
        </authorList>
    </citation>
    <scope>NUCLEOTIDE SEQUENCE [LARGE SCALE GENOMIC DNA]</scope>
    <source>
        <strain>Tucson 14024-0371.13</strain>
    </source>
</reference>
<comment type="function">
    <text evidence="3">mRNA cap-binding component of the eukaryotic translation initiation factor 3 (eIF-3) complex, which is involved in protein synthesis of a specialized repertoire of mRNAs and, together with other initiation factors, stimulates binding of mRNA and methionyl-tRNAi to the 40S ribosome. The eIF-3 complex specifically targets and initiates translation of a subset of mRNAs involved in cell proliferation. In the eIF-3 complex, eif3d specifically recognizes and binds the 7-methylguanosine cap of a subset of mRNAs.</text>
</comment>
<comment type="subunit">
    <text evidence="3">Component of the eukaryotic translation initiation factor 3 (eIF-3) complex. The eIF-3 complex interacts with pix.</text>
</comment>
<comment type="subcellular location">
    <subcellularLocation>
        <location evidence="3">Cytoplasm</location>
    </subcellularLocation>
</comment>
<comment type="domain">
    <text evidence="3">The RNA gate region regulates mRNA cap recognition to prevent promiscuous mRNA-binding before assembly of eif3d into the full eukaryotic translation initiation factor 3 (eIF-3) complex.</text>
</comment>
<comment type="similarity">
    <text evidence="3">Belongs to the eIF-3 subunit D family.</text>
</comment>
<gene>
    <name evidence="3" type="primary">eIF3d1</name>
    <name type="synonym">eIF-3p66</name>
    <name type="ORF">GF16250</name>
</gene>
<organism>
    <name type="scientific">Drosophila ananassae</name>
    <name type="common">Fruit fly</name>
    <dbReference type="NCBI Taxonomy" id="7217"/>
    <lineage>
        <taxon>Eukaryota</taxon>
        <taxon>Metazoa</taxon>
        <taxon>Ecdysozoa</taxon>
        <taxon>Arthropoda</taxon>
        <taxon>Hexapoda</taxon>
        <taxon>Insecta</taxon>
        <taxon>Pterygota</taxon>
        <taxon>Neoptera</taxon>
        <taxon>Endopterygota</taxon>
        <taxon>Diptera</taxon>
        <taxon>Brachycera</taxon>
        <taxon>Muscomorpha</taxon>
        <taxon>Ephydroidea</taxon>
        <taxon>Drosophilidae</taxon>
        <taxon>Drosophila</taxon>
        <taxon>Sophophora</taxon>
    </lineage>
</organism>
<evidence type="ECO:0000250" key="1"/>
<evidence type="ECO:0000250" key="2">
    <source>
        <dbReference type="UniProtKB" id="K7IM66"/>
    </source>
</evidence>
<evidence type="ECO:0000255" key="3">
    <source>
        <dbReference type="HAMAP-Rule" id="MF_03003"/>
    </source>
</evidence>
<evidence type="ECO:0000256" key="4">
    <source>
        <dbReference type="SAM" id="MobiDB-lite"/>
    </source>
</evidence>
<sequence length="561" mass="63803">MSETINTASQFPTFEKPTVQFNEKGWGPCELPDTFKDVPYQPFSKNDRLGKICDWTSTSNNDKKYQNKYASTFGTGNQYSYYHEEDETTFHLVDTARVQKPPHQRGRFRNMRNSRSGRGRNARGGINTHGMTTLSGKNVKARDPRRGMGKKFGNRGPPPKMRESSVAVRADWASIEEMDFPRLIKLSLPNIKEGVDIVTCGTLEYYDKTYDRINVKNEKPLQKIDRIVHTVTTTDDPVIRRLSKTIGNVFATDAILATIMCSTRSNYSWDIVIEKVGEKIFMDKRDHTEFDLLTVNETSVEPPTDDDSSCNSPRNLAIEATFINHNFSQQVLKTGDQEAKFKFQESNPFISEDEDIQVASVGYRYKKWELGSDIVLVARCEHDGVLQTPSGEPQFMSIKALNEWDSKLANGVEWRQKLDTQRGAVLANELRNNACKLAKWTVQAVLAGSDQLKLGYVSRINPRDHSRHVILGTQQFKPHEFATQINLSMDNAWGILRCIIDLVMKQKDGKYLIMKDPNKPIIRLYDIPDNTFDSDDSDDGEGDDGEGFQQVYNYANNGNKI</sequence>
<proteinExistence type="inferred from homology"/>
<name>EI3D1_DROAN</name>
<dbReference type="EMBL" id="CH902617">
    <property type="protein sequence ID" value="EDV43975.1"/>
    <property type="molecule type" value="Genomic_DNA"/>
</dbReference>
<dbReference type="SMR" id="B3LY71"/>
<dbReference type="FunCoup" id="B3LY71">
    <property type="interactions" value="2775"/>
</dbReference>
<dbReference type="STRING" id="7217.B3LY71"/>
<dbReference type="EnsemblMetazoa" id="FBtr0120950">
    <property type="protein sequence ID" value="FBpp0119442"/>
    <property type="gene ID" value="FBgn0093272"/>
</dbReference>
<dbReference type="EnsemblMetazoa" id="XM_001955378.4">
    <property type="protein sequence ID" value="XP_001955414.1"/>
    <property type="gene ID" value="LOC6499047"/>
</dbReference>
<dbReference type="GeneID" id="6499047"/>
<dbReference type="KEGG" id="dan:6499047"/>
<dbReference type="CTD" id="42789"/>
<dbReference type="eggNOG" id="KOG2479">
    <property type="taxonomic scope" value="Eukaryota"/>
</dbReference>
<dbReference type="HOGENOM" id="CLU_024521_2_0_1"/>
<dbReference type="InParanoid" id="B3LY71"/>
<dbReference type="OMA" id="FMDKRDN"/>
<dbReference type="OrthoDB" id="16538at2759"/>
<dbReference type="PhylomeDB" id="B3LY71"/>
<dbReference type="ChiTaRS" id="eIF-3p66">
    <property type="organism name" value="fly"/>
</dbReference>
<dbReference type="Proteomes" id="UP000007801">
    <property type="component" value="Unassembled WGS sequence"/>
</dbReference>
<dbReference type="GO" id="GO:0016282">
    <property type="term" value="C:eukaryotic 43S preinitiation complex"/>
    <property type="evidence" value="ECO:0007669"/>
    <property type="project" value="UniProtKB-UniRule"/>
</dbReference>
<dbReference type="GO" id="GO:0033290">
    <property type="term" value="C:eukaryotic 48S preinitiation complex"/>
    <property type="evidence" value="ECO:0007669"/>
    <property type="project" value="UniProtKB-UniRule"/>
</dbReference>
<dbReference type="GO" id="GO:0005852">
    <property type="term" value="C:eukaryotic translation initiation factor 3 complex"/>
    <property type="evidence" value="ECO:0000250"/>
    <property type="project" value="UniProtKB"/>
</dbReference>
<dbReference type="GO" id="GO:0005634">
    <property type="term" value="C:nucleus"/>
    <property type="evidence" value="ECO:0007669"/>
    <property type="project" value="EnsemblMetazoa"/>
</dbReference>
<dbReference type="GO" id="GO:0098808">
    <property type="term" value="F:mRNA cap binding"/>
    <property type="evidence" value="ECO:0007669"/>
    <property type="project" value="UniProtKB-UniRule"/>
</dbReference>
<dbReference type="GO" id="GO:0003743">
    <property type="term" value="F:translation initiation factor activity"/>
    <property type="evidence" value="ECO:0000250"/>
    <property type="project" value="UniProtKB"/>
</dbReference>
<dbReference type="GO" id="GO:0002191">
    <property type="term" value="P:cap-dependent translational initiation"/>
    <property type="evidence" value="ECO:0007669"/>
    <property type="project" value="UniProtKB-UniRule"/>
</dbReference>
<dbReference type="GO" id="GO:0001732">
    <property type="term" value="P:formation of cytoplasmic translation initiation complex"/>
    <property type="evidence" value="ECO:0007669"/>
    <property type="project" value="UniProtKB-UniRule"/>
</dbReference>
<dbReference type="GO" id="GO:0006446">
    <property type="term" value="P:regulation of translational initiation"/>
    <property type="evidence" value="ECO:0000250"/>
    <property type="project" value="UniProtKB"/>
</dbReference>
<dbReference type="HAMAP" id="MF_03003">
    <property type="entry name" value="eIF3d"/>
    <property type="match status" value="1"/>
</dbReference>
<dbReference type="InterPro" id="IPR007783">
    <property type="entry name" value="eIF3d"/>
</dbReference>
<dbReference type="PANTHER" id="PTHR12399">
    <property type="entry name" value="EUKARYOTIC TRANSLATION INITIATION FACTOR 3 SUBUNIT 7"/>
    <property type="match status" value="1"/>
</dbReference>
<dbReference type="PANTHER" id="PTHR12399:SF0">
    <property type="entry name" value="EUKARYOTIC TRANSLATION INITIATION FACTOR 3 SUBUNIT D"/>
    <property type="match status" value="1"/>
</dbReference>
<dbReference type="Pfam" id="PF05091">
    <property type="entry name" value="eIF-3_zeta"/>
    <property type="match status" value="1"/>
</dbReference>
<dbReference type="PIRSF" id="PIRSF016281">
    <property type="entry name" value="EIF-3_zeta"/>
    <property type="match status" value="1"/>
</dbReference>
<keyword id="KW-0963">Cytoplasm</keyword>
<keyword id="KW-0396">Initiation factor</keyword>
<keyword id="KW-0597">Phosphoprotein</keyword>
<keyword id="KW-0648">Protein biosynthesis</keyword>
<keyword id="KW-1185">Reference proteome</keyword>
<keyword id="KW-0694">RNA-binding</keyword>
<feature type="chain" id="PRO_0000364142" description="Eukaryotic translation initiation factor 3 subunit D-1">
    <location>
        <begin position="1"/>
        <end position="561"/>
    </location>
</feature>
<feature type="region of interest" description="Disordered" evidence="4">
    <location>
        <begin position="98"/>
        <end position="164"/>
    </location>
</feature>
<feature type="region of interest" description="RNA gate" evidence="2">
    <location>
        <begin position="289"/>
        <end position="303"/>
    </location>
</feature>
<feature type="compositionally biased region" description="Basic residues" evidence="4">
    <location>
        <begin position="100"/>
        <end position="121"/>
    </location>
</feature>
<feature type="modified residue" description="Phosphothreonine" evidence="1">
    <location>
        <position position="128"/>
    </location>
</feature>